<reference key="1">
    <citation type="journal article" date="1998" name="J. Biol. Chem.">
        <title>Cloning of a novel receptor subunit, AcPL, required for interleukin-18 signaling.</title>
        <authorList>
            <person name="Born T.L."/>
            <person name="Thomassen E."/>
            <person name="Bird T.A."/>
            <person name="Sims J.E."/>
        </authorList>
    </citation>
    <scope>NUCLEOTIDE SEQUENCE [MRNA]</scope>
    <scope>FUNCTION</scope>
</reference>
<reference key="2">
    <citation type="journal article" date="2000" name="J. Immunol.">
        <title>IL-18 receptors, their role in ligand binding and function: anti-IL-1RAcPL antibody, a potent antagonist of IL-18.</title>
        <authorList>
            <person name="Debets R."/>
            <person name="Timans J.C."/>
            <person name="Churakowa T."/>
            <person name="Zurawski S."/>
            <person name="de Waal Malefyt R."/>
            <person name="Moore K.W."/>
            <person name="Abrams J.S."/>
            <person name="O'Garra A."/>
            <person name="Bazan J.F."/>
            <person name="Kastelein R.A."/>
        </authorList>
    </citation>
    <scope>FUNCTION</scope>
</reference>
<reference key="3">
    <citation type="journal article" date="2005" name="J. Immunol.">
        <title>Accessory protein-like is essential for IL-18-mediated signaling.</title>
        <authorList>
            <person name="Cheung H."/>
            <person name="Chen N.-J."/>
            <person name="Cao Z."/>
            <person name="Ono N."/>
            <person name="Ohashi P.S."/>
            <person name="Yeh W.-C."/>
        </authorList>
    </citation>
    <scope>FUNCTION</scope>
    <scope>DISRUPTION PHENOTYPE</scope>
</reference>
<name>I18RA_MOUSE</name>
<organism>
    <name type="scientific">Mus musculus</name>
    <name type="common">Mouse</name>
    <dbReference type="NCBI Taxonomy" id="10090"/>
    <lineage>
        <taxon>Eukaryota</taxon>
        <taxon>Metazoa</taxon>
        <taxon>Chordata</taxon>
        <taxon>Craniata</taxon>
        <taxon>Vertebrata</taxon>
        <taxon>Euteleostomi</taxon>
        <taxon>Mammalia</taxon>
        <taxon>Eutheria</taxon>
        <taxon>Euarchontoglires</taxon>
        <taxon>Glires</taxon>
        <taxon>Rodentia</taxon>
        <taxon>Myomorpha</taxon>
        <taxon>Muroidea</taxon>
        <taxon>Muridae</taxon>
        <taxon>Murinae</taxon>
        <taxon>Mus</taxon>
        <taxon>Mus</taxon>
    </lineage>
</organism>
<dbReference type="EC" id="3.2.2.6" evidence="4"/>
<dbReference type="EMBL" id="AF077347">
    <property type="protein sequence ID" value="AAC72197.1"/>
    <property type="molecule type" value="mRNA"/>
</dbReference>
<dbReference type="CCDS" id="CCDS14912.1"/>
<dbReference type="RefSeq" id="NP_034683.1">
    <property type="nucleotide sequence ID" value="NM_010553.5"/>
</dbReference>
<dbReference type="SMR" id="Q9Z2B1"/>
<dbReference type="FunCoup" id="Q9Z2B1">
    <property type="interactions" value="331"/>
</dbReference>
<dbReference type="STRING" id="10090.ENSMUSP00000027237"/>
<dbReference type="GlyCosmos" id="Q9Z2B1">
    <property type="glycosylation" value="4 sites, No reported glycans"/>
</dbReference>
<dbReference type="GlyGen" id="Q9Z2B1">
    <property type="glycosylation" value="4 sites"/>
</dbReference>
<dbReference type="iPTMnet" id="Q9Z2B1"/>
<dbReference type="PhosphoSitePlus" id="Q9Z2B1"/>
<dbReference type="jPOST" id="Q9Z2B1"/>
<dbReference type="PaxDb" id="10090-ENSMUSP00000027237"/>
<dbReference type="Antibodypedia" id="17791">
    <property type="antibodies" value="386 antibodies from 30 providers"/>
</dbReference>
<dbReference type="DNASU" id="16174"/>
<dbReference type="Ensembl" id="ENSMUST00000027237.12">
    <property type="protein sequence ID" value="ENSMUSP00000027237.6"/>
    <property type="gene ID" value="ENSMUSG00000026068.12"/>
</dbReference>
<dbReference type="GeneID" id="16174"/>
<dbReference type="KEGG" id="mmu:16174"/>
<dbReference type="UCSC" id="uc007auk.2">
    <property type="organism name" value="mouse"/>
</dbReference>
<dbReference type="AGR" id="MGI:1338888"/>
<dbReference type="CTD" id="8807"/>
<dbReference type="MGI" id="MGI:1338888">
    <property type="gene designation" value="Il18rap"/>
</dbReference>
<dbReference type="VEuPathDB" id="HostDB:ENSMUSG00000026068"/>
<dbReference type="eggNOG" id="ENOG502QUSU">
    <property type="taxonomic scope" value="Eukaryota"/>
</dbReference>
<dbReference type="GeneTree" id="ENSGT01090000259985"/>
<dbReference type="HOGENOM" id="CLU_025552_2_0_1"/>
<dbReference type="InParanoid" id="Q9Z2B1"/>
<dbReference type="OMA" id="YPHIIQD"/>
<dbReference type="OrthoDB" id="6019866at2759"/>
<dbReference type="PhylomeDB" id="Q9Z2B1"/>
<dbReference type="TreeFam" id="TF325519"/>
<dbReference type="Reactome" id="R-MMU-9012546">
    <property type="pathway name" value="Interleukin-18 signaling"/>
</dbReference>
<dbReference type="BioGRID-ORCS" id="16174">
    <property type="hits" value="1 hit in 79 CRISPR screens"/>
</dbReference>
<dbReference type="PRO" id="PR:Q9Z2B1"/>
<dbReference type="Proteomes" id="UP000000589">
    <property type="component" value="Chromosome 1"/>
</dbReference>
<dbReference type="RNAct" id="Q9Z2B1">
    <property type="molecule type" value="protein"/>
</dbReference>
<dbReference type="Bgee" id="ENSMUSG00000026068">
    <property type="expression patterns" value="Expressed in granulocyte and 33 other cell types or tissues"/>
</dbReference>
<dbReference type="ExpressionAtlas" id="Q9Z2B1">
    <property type="expression patterns" value="baseline and differential"/>
</dbReference>
<dbReference type="GO" id="GO:0045092">
    <property type="term" value="C:interleukin-18 receptor complex"/>
    <property type="evidence" value="ECO:0007669"/>
    <property type="project" value="Ensembl"/>
</dbReference>
<dbReference type="GO" id="GO:0015026">
    <property type="term" value="F:coreceptor activity"/>
    <property type="evidence" value="ECO:0007669"/>
    <property type="project" value="Ensembl"/>
</dbReference>
<dbReference type="GO" id="GO:0004908">
    <property type="term" value="F:interleukin-1 receptor activity"/>
    <property type="evidence" value="ECO:0007669"/>
    <property type="project" value="InterPro"/>
</dbReference>
<dbReference type="GO" id="GO:0042008">
    <property type="term" value="F:interleukin-18 receptor activity"/>
    <property type="evidence" value="ECO:0000250"/>
    <property type="project" value="UniProtKB"/>
</dbReference>
<dbReference type="GO" id="GO:0061809">
    <property type="term" value="F:NAD+ nucleosidase activity, cyclic ADP-ribose generating"/>
    <property type="evidence" value="ECO:0007669"/>
    <property type="project" value="UniProtKB-EC"/>
</dbReference>
<dbReference type="GO" id="GO:0008283">
    <property type="term" value="P:cell population proliferation"/>
    <property type="evidence" value="ECO:0000315"/>
    <property type="project" value="MGI"/>
</dbReference>
<dbReference type="GO" id="GO:0070301">
    <property type="term" value="P:cellular response to hydrogen peroxide"/>
    <property type="evidence" value="ECO:0007669"/>
    <property type="project" value="Ensembl"/>
</dbReference>
<dbReference type="GO" id="GO:0071351">
    <property type="term" value="P:cellular response to interleukin-18"/>
    <property type="evidence" value="ECO:0000315"/>
    <property type="project" value="MGI"/>
</dbReference>
<dbReference type="GO" id="GO:0006954">
    <property type="term" value="P:inflammatory response"/>
    <property type="evidence" value="ECO:0007669"/>
    <property type="project" value="UniProtKB-KW"/>
</dbReference>
<dbReference type="GO" id="GO:0035655">
    <property type="term" value="P:interleukin-18-mediated signaling pathway"/>
    <property type="evidence" value="ECO:0000315"/>
    <property type="project" value="MGI"/>
</dbReference>
<dbReference type="GO" id="GO:0042119">
    <property type="term" value="P:neutrophil activation"/>
    <property type="evidence" value="ECO:0000315"/>
    <property type="project" value="MGI"/>
</dbReference>
<dbReference type="GO" id="GO:0045954">
    <property type="term" value="P:positive regulation of natural killer cell mediated cytotoxicity"/>
    <property type="evidence" value="ECO:0000315"/>
    <property type="project" value="MGI"/>
</dbReference>
<dbReference type="GO" id="GO:0051092">
    <property type="term" value="P:positive regulation of NF-kappaB transcription factor activity"/>
    <property type="evidence" value="ECO:0000250"/>
    <property type="project" value="UniProtKB"/>
</dbReference>
<dbReference type="FunFam" id="3.40.50.10140:FF:000002">
    <property type="entry name" value="Interleukin 1 receptor accessory protein"/>
    <property type="match status" value="1"/>
</dbReference>
<dbReference type="FunFam" id="2.60.40.10:FF:001504">
    <property type="entry name" value="Interleukin 18 receptor accessory protein"/>
    <property type="match status" value="1"/>
</dbReference>
<dbReference type="FunFam" id="2.60.40.10:FF:001761">
    <property type="entry name" value="Interleukin 18 receptor accessory protein"/>
    <property type="match status" value="1"/>
</dbReference>
<dbReference type="Gene3D" id="2.60.40.10">
    <property type="entry name" value="Immunoglobulins"/>
    <property type="match status" value="2"/>
</dbReference>
<dbReference type="Gene3D" id="3.40.50.10140">
    <property type="entry name" value="Toll/interleukin-1 receptor homology (TIR) domain"/>
    <property type="match status" value="1"/>
</dbReference>
<dbReference type="InterPro" id="IPR007110">
    <property type="entry name" value="Ig-like_dom"/>
</dbReference>
<dbReference type="InterPro" id="IPR036179">
    <property type="entry name" value="Ig-like_dom_sf"/>
</dbReference>
<dbReference type="InterPro" id="IPR013783">
    <property type="entry name" value="Ig-like_fold"/>
</dbReference>
<dbReference type="InterPro" id="IPR003599">
    <property type="entry name" value="Ig_sub"/>
</dbReference>
<dbReference type="InterPro" id="IPR015621">
    <property type="entry name" value="IL-1_rcpt_fam"/>
</dbReference>
<dbReference type="InterPro" id="IPR004074">
    <property type="entry name" value="IL-1_rcpt_I/II-typ"/>
</dbReference>
<dbReference type="InterPro" id="IPR041416">
    <property type="entry name" value="IL-1RAcP-like_ig"/>
</dbReference>
<dbReference type="InterPro" id="IPR013151">
    <property type="entry name" value="Immunoglobulin_dom"/>
</dbReference>
<dbReference type="InterPro" id="IPR000157">
    <property type="entry name" value="TIR_dom"/>
</dbReference>
<dbReference type="InterPro" id="IPR035897">
    <property type="entry name" value="Toll_tir_struct_dom_sf"/>
</dbReference>
<dbReference type="PANTHER" id="PTHR11890">
    <property type="entry name" value="INTERLEUKIN-1 RECEPTOR FAMILY MEMBER"/>
    <property type="match status" value="1"/>
</dbReference>
<dbReference type="PANTHER" id="PTHR11890:SF23">
    <property type="entry name" value="INTERLEUKIN-18 RECEPTOR ACCESSORY PROTEIN"/>
    <property type="match status" value="1"/>
</dbReference>
<dbReference type="Pfam" id="PF00047">
    <property type="entry name" value="ig"/>
    <property type="match status" value="1"/>
</dbReference>
<dbReference type="Pfam" id="PF18452">
    <property type="entry name" value="Ig_6"/>
    <property type="match status" value="1"/>
</dbReference>
<dbReference type="Pfam" id="PF01582">
    <property type="entry name" value="TIR"/>
    <property type="match status" value="1"/>
</dbReference>
<dbReference type="PRINTS" id="PR01536">
    <property type="entry name" value="INTRLKN1R12F"/>
</dbReference>
<dbReference type="PRINTS" id="PR01537">
    <property type="entry name" value="INTRLKN1R1F"/>
</dbReference>
<dbReference type="SMART" id="SM00409">
    <property type="entry name" value="IG"/>
    <property type="match status" value="2"/>
</dbReference>
<dbReference type="SMART" id="SM00255">
    <property type="entry name" value="TIR"/>
    <property type="match status" value="1"/>
</dbReference>
<dbReference type="SUPFAM" id="SSF48726">
    <property type="entry name" value="Immunoglobulin"/>
    <property type="match status" value="2"/>
</dbReference>
<dbReference type="SUPFAM" id="SSF52200">
    <property type="entry name" value="Toll/Interleukin receptor TIR domain"/>
    <property type="match status" value="1"/>
</dbReference>
<dbReference type="PROSITE" id="PS50835">
    <property type="entry name" value="IG_LIKE"/>
    <property type="match status" value="2"/>
</dbReference>
<dbReference type="PROSITE" id="PS50104">
    <property type="entry name" value="TIR"/>
    <property type="match status" value="1"/>
</dbReference>
<sequence>MLCLGWVFLWFVAGEKTTGFNHSACATKKLLWTYSARGAENFVLFCDLQELQEQKFSHASQLSPTQSPAHKPCSGSQKDLSDVQWYMQPRSGSPLEEISRNSPHMQSEGMLHILAPQTNSIWSYICRPRIRSPQDMACCIKTVLEVKPQRNVSCGNTAQDEQVLLLGSTGSIHCPSLSCQSDVQSPEMTWYKDGRLLPEHKKNPIEMADIYVFNQGLYVCDYTQSDNVSSWTVRAVVKVRTIGKDINVKPEILDPITDTLDVELGKPLTLPCRVQFGFQRLSKPVIKWYVKESTQEWEMSVFEEKRIQSTFKNEVIERTIFLREVTQRDLSRKFVCFAQNSIGNTTRTIRLRKKEEVVFVYILLGTALMLVGVLVAAAFLYWYWIEVVLLCRTYKNKDETLGDKKEFDAFVSYSNWSSPETDAVGSLSEEHLALNLFPEVLEDTYGYRLCLLDRDVTPGGVYADDIVSIIKKSRRGIFILSPSYLNGPRVFELQAAVNLALVDQTLKLILIKFCSFQEPESLPYLVKKALRVLPTVTWKGLKSVHASSRFWTQIRYHMPVKNSNRFMFNGLRIFLKGFSPEKDLVTQKPLEGMPKSGNDHGAQNLLLYSDQKRC</sequence>
<gene>
    <name evidence="10" type="primary">Il18rap</name>
</gene>
<evidence type="ECO:0000250" key="1">
    <source>
        <dbReference type="UniProtKB" id="O95256"/>
    </source>
</evidence>
<evidence type="ECO:0000255" key="2"/>
<evidence type="ECO:0000255" key="3">
    <source>
        <dbReference type="PROSITE-ProRule" id="PRU00114"/>
    </source>
</evidence>
<evidence type="ECO:0000255" key="4">
    <source>
        <dbReference type="PROSITE-ProRule" id="PRU00204"/>
    </source>
</evidence>
<evidence type="ECO:0000256" key="5">
    <source>
        <dbReference type="SAM" id="MobiDB-lite"/>
    </source>
</evidence>
<evidence type="ECO:0000269" key="6">
    <source>
    </source>
</evidence>
<evidence type="ECO:0000269" key="7">
    <source>
    </source>
</evidence>
<evidence type="ECO:0000269" key="8">
    <source>
    </source>
</evidence>
<evidence type="ECO:0000305" key="9"/>
<evidence type="ECO:0000312" key="10">
    <source>
        <dbReference type="MGI" id="MGI:1338888"/>
    </source>
</evidence>
<accession>Q9Z2B1</accession>
<keyword id="KW-1003">Cell membrane</keyword>
<keyword id="KW-1015">Disulfide bond</keyword>
<keyword id="KW-0325">Glycoprotein</keyword>
<keyword id="KW-0378">Hydrolase</keyword>
<keyword id="KW-0393">Immunoglobulin domain</keyword>
<keyword id="KW-0395">Inflammatory response</keyword>
<keyword id="KW-0472">Membrane</keyword>
<keyword id="KW-0520">NAD</keyword>
<keyword id="KW-0675">Receptor</keyword>
<keyword id="KW-1185">Reference proteome</keyword>
<keyword id="KW-0677">Repeat</keyword>
<keyword id="KW-0732">Signal</keyword>
<keyword id="KW-0812">Transmembrane</keyword>
<keyword id="KW-1133">Transmembrane helix</keyword>
<feature type="signal peptide" evidence="2">
    <location>
        <begin position="1"/>
        <end position="19"/>
    </location>
</feature>
<feature type="chain" id="PRO_0000042186" description="Interleukin-18 receptor accessory protein">
    <location>
        <begin position="20"/>
        <end position="614"/>
    </location>
</feature>
<feature type="topological domain" description="Extracellular" evidence="2">
    <location>
        <begin position="20"/>
        <end position="356"/>
    </location>
</feature>
<feature type="transmembrane region" description="Helical" evidence="2">
    <location>
        <begin position="357"/>
        <end position="377"/>
    </location>
</feature>
<feature type="topological domain" description="Cytoplasmic" evidence="2">
    <location>
        <begin position="378"/>
        <end position="614"/>
    </location>
</feature>
<feature type="domain" description="Ig-like C2-type 1">
    <location>
        <begin position="148"/>
        <end position="234"/>
    </location>
</feature>
<feature type="domain" description="Ig-like C2-type 2">
    <location>
        <begin position="250"/>
        <end position="352"/>
    </location>
</feature>
<feature type="domain" description="TIR" evidence="4">
    <location>
        <begin position="405"/>
        <end position="558"/>
    </location>
</feature>
<feature type="region of interest" description="Disordered" evidence="5">
    <location>
        <begin position="59"/>
        <end position="78"/>
    </location>
</feature>
<feature type="active site" evidence="4">
    <location>
        <position position="492"/>
    </location>
</feature>
<feature type="glycosylation site" description="N-linked (GlcNAc...) asparagine" evidence="2">
    <location>
        <position position="21"/>
    </location>
</feature>
<feature type="glycosylation site" description="N-linked (GlcNAc...) asparagine" evidence="2">
    <location>
        <position position="151"/>
    </location>
</feature>
<feature type="glycosylation site" description="N-linked (GlcNAc...) asparagine" evidence="2">
    <location>
        <position position="227"/>
    </location>
</feature>
<feature type="glycosylation site" description="N-linked (GlcNAc...) asparagine" evidence="2">
    <location>
        <position position="344"/>
    </location>
</feature>
<feature type="disulfide bond" evidence="1">
    <location>
        <begin position="46"/>
        <end position="126"/>
    </location>
</feature>
<feature type="disulfide bond" evidence="1">
    <location>
        <begin position="154"/>
        <end position="179"/>
    </location>
</feature>
<feature type="disulfide bond" evidence="1">
    <location>
        <begin position="174"/>
        <end position="220"/>
    </location>
</feature>
<feature type="disulfide bond" evidence="3">
    <location>
        <begin position="179"/>
        <end position="220"/>
    </location>
</feature>
<feature type="disulfide bond" evidence="3">
    <location>
        <begin position="272"/>
        <end position="336"/>
    </location>
</feature>
<protein>
    <recommendedName>
        <fullName>Interleukin-18 receptor accessory protein</fullName>
        <shortName>IL-18 receptor accessory protein</shortName>
        <shortName>IL-18RAcP</shortName>
        <ecNumber evidence="4">3.2.2.6</ecNumber>
    </recommendedName>
    <alternativeName>
        <fullName>Accessory protein-like</fullName>
        <shortName>AcPL</shortName>
    </alternativeName>
    <alternativeName>
        <fullName>CD218 antigen-like family member B</fullName>
    </alternativeName>
    <alternativeName>
        <fullName>IL-1R accessory protein-like</fullName>
        <shortName>IL-1RAcPL</shortName>
    </alternativeName>
    <alternativeName>
        <fullName>Interleukin-18 receptor accessory protein-like</fullName>
    </alternativeName>
    <alternativeName>
        <fullName>Interleukin-18 receptor beta</fullName>
        <shortName>IL-18R-beta</shortName>
        <shortName>IL-18Rbeta</shortName>
    </alternativeName>
    <cdAntigenName>CD218b</cdAntigenName>
</protein>
<comment type="function">
    <text evidence="1 6 7 8">Within the IL18 receptor complex, does not mediate IL18-binding, but involved in IL18-dependent signal transduction, leading to NF-kappa-B and JNK activation (PubMed:11046021, PubMed:15843532, PubMed:9792649). May play a role in IL18-mediated IFNG synthesis from T-helper 1 (Th1) cells (By similarity).</text>
</comment>
<comment type="catalytic activity">
    <reaction evidence="4">
        <text>NAD(+) + H2O = ADP-D-ribose + nicotinamide + H(+)</text>
        <dbReference type="Rhea" id="RHEA:16301"/>
        <dbReference type="ChEBI" id="CHEBI:15377"/>
        <dbReference type="ChEBI" id="CHEBI:15378"/>
        <dbReference type="ChEBI" id="CHEBI:17154"/>
        <dbReference type="ChEBI" id="CHEBI:57540"/>
        <dbReference type="ChEBI" id="CHEBI:57967"/>
        <dbReference type="EC" id="3.2.2.6"/>
    </reaction>
    <physiologicalReaction direction="left-to-right" evidence="4">
        <dbReference type="Rhea" id="RHEA:16302"/>
    </physiologicalReaction>
</comment>
<comment type="subunit">
    <text evidence="1">Forms a ternary complex with IL18 and IL18R1. Within this complex, IL18R1 is involved in ligand-binding and IL18RAP in signaling leading to NF-kappa-B and JNK activation.</text>
</comment>
<comment type="subcellular location">
    <subcellularLocation>
        <location evidence="1">Cell membrane</location>
        <topology evidence="9">Single-pass type I membrane protein</topology>
    </subcellularLocation>
</comment>
<comment type="domain">
    <text evidence="4">The TIR domain mediates NAD(+) hydrolase (NADase) activity. Self-association of TIR domains is required for NADase activity.</text>
</comment>
<comment type="disruption phenotype">
    <text evidence="7">Impaired IL-18 signaling.</text>
</comment>
<comment type="similarity">
    <text evidence="9">Belongs to the interleukin-1 receptor family.</text>
</comment>
<proteinExistence type="evidence at transcript level"/>